<feature type="signal peptide" evidence="1">
    <location>
        <begin position="1"/>
        <end position="34"/>
    </location>
</feature>
<feature type="chain" id="PRO_5000224511" description="Glucans biosynthesis protein G">
    <location>
        <begin position="35"/>
        <end position="542"/>
    </location>
</feature>
<proteinExistence type="inferred from homology"/>
<name>OPGG_SHEB5</name>
<protein>
    <recommendedName>
        <fullName evidence="1">Glucans biosynthesis protein G</fullName>
    </recommendedName>
</protein>
<evidence type="ECO:0000255" key="1">
    <source>
        <dbReference type="HAMAP-Rule" id="MF_01069"/>
    </source>
</evidence>
<dbReference type="EMBL" id="CP000563">
    <property type="protein sequence ID" value="ABN61402.1"/>
    <property type="molecule type" value="Genomic_DNA"/>
</dbReference>
<dbReference type="RefSeq" id="WP_011846652.1">
    <property type="nucleotide sequence ID" value="NC_009052.1"/>
</dbReference>
<dbReference type="SMR" id="A3D3T9"/>
<dbReference type="STRING" id="325240.Sbal_1896"/>
<dbReference type="KEGG" id="sbl:Sbal_1896"/>
<dbReference type="HOGENOM" id="CLU_023403_2_0_6"/>
<dbReference type="OrthoDB" id="335750at2"/>
<dbReference type="UniPathway" id="UPA00637"/>
<dbReference type="Proteomes" id="UP000001557">
    <property type="component" value="Chromosome"/>
</dbReference>
<dbReference type="GO" id="GO:0030288">
    <property type="term" value="C:outer membrane-bounded periplasmic space"/>
    <property type="evidence" value="ECO:0007669"/>
    <property type="project" value="TreeGrafter"/>
</dbReference>
<dbReference type="GO" id="GO:0030246">
    <property type="term" value="F:carbohydrate binding"/>
    <property type="evidence" value="ECO:0007669"/>
    <property type="project" value="InterPro"/>
</dbReference>
<dbReference type="GO" id="GO:0003824">
    <property type="term" value="F:catalytic activity"/>
    <property type="evidence" value="ECO:0007669"/>
    <property type="project" value="InterPro"/>
</dbReference>
<dbReference type="GO" id="GO:0051274">
    <property type="term" value="P:beta-glucan biosynthetic process"/>
    <property type="evidence" value="ECO:0007669"/>
    <property type="project" value="TreeGrafter"/>
</dbReference>
<dbReference type="FunFam" id="2.60.40.10:FF:001915">
    <property type="entry name" value="Glucans biosynthesis protein G"/>
    <property type="match status" value="1"/>
</dbReference>
<dbReference type="FunFam" id="2.70.98.10:FF:000001">
    <property type="entry name" value="Glucans biosynthesis protein G"/>
    <property type="match status" value="1"/>
</dbReference>
<dbReference type="Gene3D" id="2.70.98.10">
    <property type="match status" value="1"/>
</dbReference>
<dbReference type="Gene3D" id="2.60.40.10">
    <property type="entry name" value="Immunoglobulins"/>
    <property type="match status" value="1"/>
</dbReference>
<dbReference type="HAMAP" id="MF_01069">
    <property type="entry name" value="MdoG_OpgG"/>
    <property type="match status" value="1"/>
</dbReference>
<dbReference type="InterPro" id="IPR011013">
    <property type="entry name" value="Gal_mutarotase_sf_dom"/>
</dbReference>
<dbReference type="InterPro" id="IPR014718">
    <property type="entry name" value="GH-type_carb-bd"/>
</dbReference>
<dbReference type="InterPro" id="IPR014438">
    <property type="entry name" value="Glucan_biosyn_MdoG/MdoD"/>
</dbReference>
<dbReference type="InterPro" id="IPR007444">
    <property type="entry name" value="Glucan_biosyn_MdoG_C"/>
</dbReference>
<dbReference type="InterPro" id="IPR013783">
    <property type="entry name" value="Ig-like_fold"/>
</dbReference>
<dbReference type="InterPro" id="IPR014756">
    <property type="entry name" value="Ig_E-set"/>
</dbReference>
<dbReference type="InterPro" id="IPR023704">
    <property type="entry name" value="MdoG_OpgG"/>
</dbReference>
<dbReference type="PANTHER" id="PTHR30504">
    <property type="entry name" value="GLUCANS BIOSYNTHESIS PROTEIN"/>
    <property type="match status" value="1"/>
</dbReference>
<dbReference type="PANTHER" id="PTHR30504:SF2">
    <property type="entry name" value="GLUCANS BIOSYNTHESIS PROTEIN G"/>
    <property type="match status" value="1"/>
</dbReference>
<dbReference type="Pfam" id="PF04349">
    <property type="entry name" value="MdoG"/>
    <property type="match status" value="1"/>
</dbReference>
<dbReference type="PIRSF" id="PIRSF006281">
    <property type="entry name" value="MdoG"/>
    <property type="match status" value="1"/>
</dbReference>
<dbReference type="SUPFAM" id="SSF81296">
    <property type="entry name" value="E set domains"/>
    <property type="match status" value="1"/>
</dbReference>
<dbReference type="SUPFAM" id="SSF74650">
    <property type="entry name" value="Galactose mutarotase-like"/>
    <property type="match status" value="1"/>
</dbReference>
<comment type="function">
    <text evidence="1">Involved in the biosynthesis of osmoregulated periplasmic glucans (OPGs).</text>
</comment>
<comment type="pathway">
    <text evidence="1">Glycan metabolism; osmoregulated periplasmic glucan (OPG) biosynthesis.</text>
</comment>
<comment type="subcellular location">
    <subcellularLocation>
        <location evidence="1">Periplasm</location>
    </subcellularLocation>
</comment>
<comment type="similarity">
    <text evidence="1">Belongs to the OpgD/OpgG family.</text>
</comment>
<organism>
    <name type="scientific">Shewanella baltica (strain OS155 / ATCC BAA-1091)</name>
    <dbReference type="NCBI Taxonomy" id="325240"/>
    <lineage>
        <taxon>Bacteria</taxon>
        <taxon>Pseudomonadati</taxon>
        <taxon>Pseudomonadota</taxon>
        <taxon>Gammaproteobacteria</taxon>
        <taxon>Alteromonadales</taxon>
        <taxon>Shewanellaceae</taxon>
        <taxon>Shewanella</taxon>
    </lineage>
</organism>
<sequence>MVSLLRCPSSKPYSSLICSLTLGAVVALSGVAYAEETKPAETVPVVTPPKVISQPATKNQVRFTKTGAFDSDTVVKIAKRLAAKPYVALKDPLPAGLAKLSYDEYRDIRFNPTASIWRDQGVPFQMQMFHRGFYFQDLIEIAIVEGQNATHLAYEPKYFTAGEVITQALPNDDIGYSGFRIHNQLNTNGVFDELMVFQGASYFRALGKGNAYGLSSRGLALKTADAEGEEFPIFRAFWVERPYNDSNLIVVHALLDSPSVAGAYTFSVRPGDNTLIDVEATLFPRVELSKVGLAPSTSMFLHSLNGRHDTDDFRPEVHDSDGLLMLNGRGEHLWRPLANPRQLQVSAFSDNSPQGFGLIQRERDYASYQDLEAHYERRPSLWIEPVGNWGQGSVVLTEIPTESEIHDNIVSYWKPRQPIPAGSEFHFAYRMSWGDEPAAKVGAVHVSRSASGRADIAKATPRRLFVVDYQIEGPMTDEMPVAKVEASGGVVTNVVIARNAAKNGYRLAFELEPEDKELIELRAELKFPTPRQVETWLYRWTL</sequence>
<gene>
    <name evidence="1" type="primary">opgG</name>
    <name type="ordered locus">Sbal_1896</name>
</gene>
<keyword id="KW-0574">Periplasm</keyword>
<keyword id="KW-1185">Reference proteome</keyword>
<keyword id="KW-0732">Signal</keyword>
<accession>A3D3T9</accession>
<reference key="1">
    <citation type="submission" date="2007-02" db="EMBL/GenBank/DDBJ databases">
        <title>Complete sequence of chromosome of Shewanella baltica OS155.</title>
        <authorList>
            <consortium name="US DOE Joint Genome Institute"/>
            <person name="Copeland A."/>
            <person name="Lucas S."/>
            <person name="Lapidus A."/>
            <person name="Barry K."/>
            <person name="Detter J.C."/>
            <person name="Glavina del Rio T."/>
            <person name="Hammon N."/>
            <person name="Israni S."/>
            <person name="Dalin E."/>
            <person name="Tice H."/>
            <person name="Pitluck S."/>
            <person name="Sims D.R."/>
            <person name="Brettin T."/>
            <person name="Bruce D."/>
            <person name="Han C."/>
            <person name="Tapia R."/>
            <person name="Brainard J."/>
            <person name="Schmutz J."/>
            <person name="Larimer F."/>
            <person name="Land M."/>
            <person name="Hauser L."/>
            <person name="Kyrpides N."/>
            <person name="Mikhailova N."/>
            <person name="Brettar I."/>
            <person name="Klappenbach J."/>
            <person name="Konstantinidis K."/>
            <person name="Rodrigues J."/>
            <person name="Tiedje J."/>
            <person name="Richardson P."/>
        </authorList>
    </citation>
    <scope>NUCLEOTIDE SEQUENCE [LARGE SCALE GENOMIC DNA]</scope>
    <source>
        <strain>OS155 / ATCC BAA-1091</strain>
    </source>
</reference>